<accession>A6WCY3</accession>
<proteinExistence type="inferred from homology"/>
<organism>
    <name type="scientific">Kineococcus radiotolerans (strain ATCC BAA-149 / DSM 14245 / SRS30216)</name>
    <dbReference type="NCBI Taxonomy" id="266940"/>
    <lineage>
        <taxon>Bacteria</taxon>
        <taxon>Bacillati</taxon>
        <taxon>Actinomycetota</taxon>
        <taxon>Actinomycetes</taxon>
        <taxon>Kineosporiales</taxon>
        <taxon>Kineosporiaceae</taxon>
        <taxon>Kineococcus</taxon>
    </lineage>
</organism>
<comment type="subunit">
    <text evidence="1">Forms oligomers.</text>
</comment>
<comment type="subcellular location">
    <subcellularLocation>
        <location evidence="1">Cytoplasm</location>
        <location evidence="1">Nucleoid</location>
    </subcellularLocation>
</comment>
<comment type="similarity">
    <text evidence="1">Belongs to the MraZ family.</text>
</comment>
<feature type="chain" id="PRO_1000084008" description="Transcriptional regulator MraZ">
    <location>
        <begin position="1"/>
        <end position="143"/>
    </location>
</feature>
<feature type="domain" description="SpoVT-AbrB 1" evidence="2">
    <location>
        <begin position="5"/>
        <end position="47"/>
    </location>
</feature>
<feature type="domain" description="SpoVT-AbrB 2" evidence="2">
    <location>
        <begin position="76"/>
        <end position="119"/>
    </location>
</feature>
<sequence>MFLGTHTPRLDDKGRLILPARFRDQLLDGLVITRGQERCLYIFPMQEFQRMHEEMRQAPLTNKEARDYQRVFLSGASSELPDKQGRVTVPPLLRTYAGLERDVAVIGAGARVELWDLRTWESYLDEVEPAFADRREEVLPGVL</sequence>
<gene>
    <name evidence="1" type="primary">mraZ</name>
    <name type="ordered locus">Krad_3208</name>
</gene>
<dbReference type="EMBL" id="CP000750">
    <property type="protein sequence ID" value="ABS04672.1"/>
    <property type="molecule type" value="Genomic_DNA"/>
</dbReference>
<dbReference type="RefSeq" id="WP_012087074.1">
    <property type="nucleotide sequence ID" value="NC_009664.2"/>
</dbReference>
<dbReference type="SMR" id="A6WCY3"/>
<dbReference type="STRING" id="266940.Krad_3208"/>
<dbReference type="KEGG" id="kra:Krad_3208"/>
<dbReference type="eggNOG" id="COG2001">
    <property type="taxonomic scope" value="Bacteria"/>
</dbReference>
<dbReference type="HOGENOM" id="CLU_107907_0_5_11"/>
<dbReference type="OrthoDB" id="9807753at2"/>
<dbReference type="Proteomes" id="UP000001116">
    <property type="component" value="Chromosome"/>
</dbReference>
<dbReference type="GO" id="GO:0005737">
    <property type="term" value="C:cytoplasm"/>
    <property type="evidence" value="ECO:0007669"/>
    <property type="project" value="UniProtKB-UniRule"/>
</dbReference>
<dbReference type="GO" id="GO:0009295">
    <property type="term" value="C:nucleoid"/>
    <property type="evidence" value="ECO:0007669"/>
    <property type="project" value="UniProtKB-SubCell"/>
</dbReference>
<dbReference type="GO" id="GO:0003700">
    <property type="term" value="F:DNA-binding transcription factor activity"/>
    <property type="evidence" value="ECO:0007669"/>
    <property type="project" value="UniProtKB-UniRule"/>
</dbReference>
<dbReference type="GO" id="GO:0000976">
    <property type="term" value="F:transcription cis-regulatory region binding"/>
    <property type="evidence" value="ECO:0007669"/>
    <property type="project" value="TreeGrafter"/>
</dbReference>
<dbReference type="GO" id="GO:2000143">
    <property type="term" value="P:negative regulation of DNA-templated transcription initiation"/>
    <property type="evidence" value="ECO:0007669"/>
    <property type="project" value="TreeGrafter"/>
</dbReference>
<dbReference type="CDD" id="cd16321">
    <property type="entry name" value="MraZ_C"/>
    <property type="match status" value="1"/>
</dbReference>
<dbReference type="CDD" id="cd16320">
    <property type="entry name" value="MraZ_N"/>
    <property type="match status" value="1"/>
</dbReference>
<dbReference type="Gene3D" id="3.40.1550.20">
    <property type="entry name" value="Transcriptional regulator MraZ domain"/>
    <property type="match status" value="1"/>
</dbReference>
<dbReference type="HAMAP" id="MF_01008">
    <property type="entry name" value="MraZ"/>
    <property type="match status" value="1"/>
</dbReference>
<dbReference type="InterPro" id="IPR003444">
    <property type="entry name" value="MraZ"/>
</dbReference>
<dbReference type="InterPro" id="IPR035644">
    <property type="entry name" value="MraZ_C"/>
</dbReference>
<dbReference type="InterPro" id="IPR020603">
    <property type="entry name" value="MraZ_dom"/>
</dbReference>
<dbReference type="InterPro" id="IPR035642">
    <property type="entry name" value="MraZ_N"/>
</dbReference>
<dbReference type="InterPro" id="IPR038619">
    <property type="entry name" value="MraZ_sf"/>
</dbReference>
<dbReference type="InterPro" id="IPR007159">
    <property type="entry name" value="SpoVT-AbrB_dom"/>
</dbReference>
<dbReference type="InterPro" id="IPR037914">
    <property type="entry name" value="SpoVT-AbrB_sf"/>
</dbReference>
<dbReference type="NCBIfam" id="TIGR00242">
    <property type="entry name" value="division/cell wall cluster transcriptional repressor MraZ"/>
    <property type="match status" value="1"/>
</dbReference>
<dbReference type="PANTHER" id="PTHR34701">
    <property type="entry name" value="TRANSCRIPTIONAL REGULATOR MRAZ"/>
    <property type="match status" value="1"/>
</dbReference>
<dbReference type="PANTHER" id="PTHR34701:SF1">
    <property type="entry name" value="TRANSCRIPTIONAL REGULATOR MRAZ"/>
    <property type="match status" value="1"/>
</dbReference>
<dbReference type="Pfam" id="PF02381">
    <property type="entry name" value="MraZ"/>
    <property type="match status" value="2"/>
</dbReference>
<dbReference type="SUPFAM" id="SSF89447">
    <property type="entry name" value="AbrB/MazE/MraZ-like"/>
    <property type="match status" value="1"/>
</dbReference>
<dbReference type="PROSITE" id="PS51740">
    <property type="entry name" value="SPOVT_ABRB"/>
    <property type="match status" value="2"/>
</dbReference>
<evidence type="ECO:0000255" key="1">
    <source>
        <dbReference type="HAMAP-Rule" id="MF_01008"/>
    </source>
</evidence>
<evidence type="ECO:0000255" key="2">
    <source>
        <dbReference type="PROSITE-ProRule" id="PRU01076"/>
    </source>
</evidence>
<name>MRAZ_KINRD</name>
<protein>
    <recommendedName>
        <fullName>Transcriptional regulator MraZ</fullName>
    </recommendedName>
</protein>
<reference key="1">
    <citation type="journal article" date="2008" name="PLoS ONE">
        <title>Survival in nuclear waste, extreme resistance, and potential applications gleaned from the genome sequence of Kineococcus radiotolerans SRS30216.</title>
        <authorList>
            <person name="Bagwell C.E."/>
            <person name="Bhat S."/>
            <person name="Hawkins G.M."/>
            <person name="Smith B.W."/>
            <person name="Biswas T."/>
            <person name="Hoover T.R."/>
            <person name="Saunders E."/>
            <person name="Han C.S."/>
            <person name="Tsodikov O.V."/>
            <person name="Shimkets L.J."/>
        </authorList>
    </citation>
    <scope>NUCLEOTIDE SEQUENCE [LARGE SCALE GENOMIC DNA]</scope>
    <source>
        <strain>ATCC BAA-149 / DSM 14245 / SRS30216</strain>
    </source>
</reference>
<keyword id="KW-0963">Cytoplasm</keyword>
<keyword id="KW-0238">DNA-binding</keyword>
<keyword id="KW-1185">Reference proteome</keyword>
<keyword id="KW-0677">Repeat</keyword>
<keyword id="KW-0804">Transcription</keyword>
<keyword id="KW-0805">Transcription regulation</keyword>